<organism>
    <name type="scientific">Pithecopus nordestinus</name>
    <name type="common">Northeastern Brazilian leaf frog</name>
    <name type="synonym">Phyllomedusa nordestina</name>
    <dbReference type="NCBI Taxonomy" id="2034992"/>
    <lineage>
        <taxon>Eukaryota</taxon>
        <taxon>Metazoa</taxon>
        <taxon>Chordata</taxon>
        <taxon>Craniata</taxon>
        <taxon>Vertebrata</taxon>
        <taxon>Euteleostomi</taxon>
        <taxon>Amphibia</taxon>
        <taxon>Batrachia</taxon>
        <taxon>Anura</taxon>
        <taxon>Neobatrachia</taxon>
        <taxon>Hyloidea</taxon>
        <taxon>Hylidae</taxon>
        <taxon>Phyllomedusinae</taxon>
        <taxon>Pithecopus</taxon>
    </lineage>
</organism>
<protein>
    <recommendedName>
        <fullName evidence="3">Medusin-N1</fullName>
        <shortName evidence="3">MDS-N1</shortName>
    </recommendedName>
    <alternativeName>
        <fullName evidence="2">Phylloseptin-S1</fullName>
        <shortName evidence="2">PLS-S1</shortName>
    </alternativeName>
</protein>
<dbReference type="GO" id="GO:0005576">
    <property type="term" value="C:extracellular region"/>
    <property type="evidence" value="ECO:0007669"/>
    <property type="project" value="UniProtKB-SubCell"/>
</dbReference>
<dbReference type="GO" id="GO:0045087">
    <property type="term" value="P:innate immune response"/>
    <property type="evidence" value="ECO:0007669"/>
    <property type="project" value="UniProtKB-KW"/>
</dbReference>
<keyword id="KW-0027">Amidation</keyword>
<keyword id="KW-0878">Amphibian defense peptide</keyword>
<keyword id="KW-0929">Antimicrobial</keyword>
<keyword id="KW-0903">Direct protein sequencing</keyword>
<keyword id="KW-0391">Immunity</keyword>
<keyword id="KW-0399">Innate immunity</keyword>
<keyword id="KW-0964">Secreted</keyword>
<reference key="1">
    <citation type="journal article" date="2013" name="Molecules">
        <title>The skin secretion of the amphibian Phyllomedusa nordestina: a source of antimicrobial and antiprotozoal peptides.</title>
        <authorList>
            <person name="Brand G.D."/>
            <person name="Santos R.C."/>
            <person name="Arake L.M."/>
            <person name="Silva V.G."/>
            <person name="Veras L.M."/>
            <person name="Costa V."/>
            <person name="Costa C.H."/>
            <person name="Kuckelhaus S.S."/>
            <person name="Alexandre J.G."/>
            <person name="Feio M.J."/>
            <person name="Leite J.R."/>
        </authorList>
    </citation>
    <scope>PROTEIN SEQUENCE</scope>
    <scope>FUNCTION</scope>
    <scope>MASS SPECTROMETRY</scope>
    <scope>AMIDATION AT LEU-18</scope>
    <scope>SYNTHESIS</scope>
</reference>
<accession>P0DTT9</accession>
<comment type="function">
    <text evidence="1">Antimicrobial peptide with very low activity against Leishmania species (L.amazonensis and L.infantum) (PubMed:23774944). Shows low cytotoxicity against mammalian cells in models of peritoneal macrophages (PubMed:23774944).</text>
</comment>
<comment type="subcellular location">
    <subcellularLocation>
        <location evidence="1">Secreted</location>
    </subcellularLocation>
</comment>
<comment type="tissue specificity">
    <text evidence="4">Expressed by the skin glands.</text>
</comment>
<comment type="mass spectrometry" mass="1796.18" method="MALDI" evidence="1"/>
<comment type="similarity">
    <text evidence="3">Belongs to the frog skin active peptide (FSAP) family. Medusin subfamily.</text>
</comment>
<comment type="caution">
    <text evidence="4">Sequence shown in this entry in copied from Fig.2, and not from Table 1, which differ.</text>
</comment>
<name>MDS1_PITNO</name>
<evidence type="ECO:0000269" key="1">
    <source>
    </source>
</evidence>
<evidence type="ECO:0000303" key="2">
    <source>
    </source>
</evidence>
<evidence type="ECO:0000305" key="3"/>
<evidence type="ECO:0000305" key="4">
    <source>
    </source>
</evidence>
<feature type="peptide" id="PRO_0000449579" description="Medusin-N1" evidence="1">
    <location>
        <begin position="1"/>
        <end position="18"/>
    </location>
</feature>
<feature type="modified residue" description="Leucine amide" evidence="1">
    <location>
        <position position="18"/>
    </location>
</feature>
<proteinExistence type="evidence at protein level"/>
<sequence length="18" mass="1797">LLGMLPVALSALSALSKL</sequence>